<protein>
    <recommendedName>
        <fullName>Glycosyl-4,4'-diaponeurosporenoate acyltransferase</fullName>
        <ecNumber>2.3.1.-</ecNumber>
    </recommendedName>
</protein>
<gene>
    <name type="primary">crtO</name>
    <name type="ordered locus">SAB2438c</name>
</gene>
<reference key="1">
    <citation type="journal article" date="2007" name="PLoS ONE">
        <title>Molecular correlates of host specialization in Staphylococcus aureus.</title>
        <authorList>
            <person name="Herron-Olson L."/>
            <person name="Fitzgerald J.R."/>
            <person name="Musser J.M."/>
            <person name="Kapur V."/>
        </authorList>
    </citation>
    <scope>NUCLEOTIDE SEQUENCE [LARGE SCALE GENOMIC DNA]</scope>
    <source>
        <strain>bovine RF122 / ET3-1</strain>
    </source>
</reference>
<keyword id="KW-0012">Acyltransferase</keyword>
<keyword id="KW-0125">Carotenoid biosynthesis</keyword>
<keyword id="KW-1003">Cell membrane</keyword>
<keyword id="KW-0472">Membrane</keyword>
<keyword id="KW-0732">Signal</keyword>
<keyword id="KW-0808">Transferase</keyword>
<keyword id="KW-0812">Transmembrane</keyword>
<keyword id="KW-1133">Transmembrane helix</keyword>
<comment type="function">
    <text evidence="1">Catalyzes the acylation of glycosyl-4,4'-diaponeurosporenoate, i.e. the esterification of glucose at the C6'' position with the carboxyl group of the C(15) fatty acid 12-methyltetradecanoic acid, to yield staphyloxanthin. This is the last step in the biosynthesis of this orange pigment, present in most staphylococci strains (By similarity).</text>
</comment>
<comment type="pathway">
    <text>Carotenoid biosynthesis; staphyloxanthin biosynthesis; staphyloxanthin from farnesyl diphosphate: step 5/5.</text>
</comment>
<comment type="subcellular location">
    <subcellularLocation>
        <location evidence="3">Cell membrane</location>
        <topology evidence="3">Single-pass membrane protein</topology>
    </subcellularLocation>
</comment>
<comment type="similarity">
    <text evidence="3">Belongs to the acyltransferase CrtO family.</text>
</comment>
<accession>Q2YWE4</accession>
<name>CRTO_STAAB</name>
<organism>
    <name type="scientific">Staphylococcus aureus (strain bovine RF122 / ET3-1)</name>
    <dbReference type="NCBI Taxonomy" id="273036"/>
    <lineage>
        <taxon>Bacteria</taxon>
        <taxon>Bacillati</taxon>
        <taxon>Bacillota</taxon>
        <taxon>Bacilli</taxon>
        <taxon>Bacillales</taxon>
        <taxon>Staphylococcaceae</taxon>
        <taxon>Staphylococcus</taxon>
    </lineage>
</organism>
<dbReference type="EC" id="2.3.1.-"/>
<dbReference type="EMBL" id="AJ938182">
    <property type="protein sequence ID" value="CAI82126.1"/>
    <property type="molecule type" value="Genomic_DNA"/>
</dbReference>
<dbReference type="KEGG" id="sab:SAB2438c"/>
<dbReference type="HOGENOM" id="CLU_133300_0_0_9"/>
<dbReference type="UniPathway" id="UPA00029">
    <property type="reaction ID" value="UER00560"/>
</dbReference>
<dbReference type="GO" id="GO:0005886">
    <property type="term" value="C:plasma membrane"/>
    <property type="evidence" value="ECO:0007669"/>
    <property type="project" value="UniProtKB-SubCell"/>
</dbReference>
<dbReference type="GO" id="GO:0016746">
    <property type="term" value="F:acyltransferase activity"/>
    <property type="evidence" value="ECO:0007669"/>
    <property type="project" value="UniProtKB-KW"/>
</dbReference>
<dbReference type="GO" id="GO:0016117">
    <property type="term" value="P:carotenoid biosynthetic process"/>
    <property type="evidence" value="ECO:0007669"/>
    <property type="project" value="UniProtKB-KW"/>
</dbReference>
<dbReference type="InterPro" id="IPR044021">
    <property type="entry name" value="CrtO"/>
</dbReference>
<dbReference type="Pfam" id="PF18927">
    <property type="entry name" value="CrtO"/>
    <property type="match status" value="1"/>
</dbReference>
<feature type="signal peptide" evidence="2">
    <location>
        <begin position="1"/>
        <end position="28"/>
    </location>
</feature>
<feature type="chain" id="PRO_0000284847" description="Glycosyl-4,4'-diaponeurosporenoate acyltransferase">
    <location>
        <begin position="29"/>
        <end position="165"/>
    </location>
</feature>
<feature type="transmembrane region" description="Helical" evidence="2">
    <location>
        <begin position="126"/>
        <end position="145"/>
    </location>
</feature>
<evidence type="ECO:0000250" key="1"/>
<evidence type="ECO:0000255" key="2"/>
<evidence type="ECO:0000305" key="3"/>
<sequence length="165" mass="20307">MKTMKKYIKTAFFCSMYWLIVQLNIANLGTRIPDKYFRQKHIIFKSFNFEKHGKFWNKWFYVRKWKHKILDGHQLNRNIYDQRHLMTINSDEIEKMIIETKRAELIHWISILPVIIFNKGPRLVKYINIFYAMIANVPIIIVQRYNRPRLTQLLRILKRRGERHD</sequence>
<proteinExistence type="inferred from homology"/>